<name>SELNS_PICSI</name>
<protein>
    <recommendedName>
        <fullName evidence="7">Delta-selinene-like synthase, chloroplastic</fullName>
        <shortName evidence="7">PsTPS-Sell</shortName>
        <ecNumber evidence="2">4.2.3.76</ecNumber>
    </recommendedName>
</protein>
<organism>
    <name type="scientific">Picea sitchensis</name>
    <name type="common">Sitka spruce</name>
    <name type="synonym">Pinus sitchensis</name>
    <dbReference type="NCBI Taxonomy" id="3332"/>
    <lineage>
        <taxon>Eukaryota</taxon>
        <taxon>Viridiplantae</taxon>
        <taxon>Streptophyta</taxon>
        <taxon>Embryophyta</taxon>
        <taxon>Tracheophyta</taxon>
        <taxon>Spermatophyta</taxon>
        <taxon>Pinopsida</taxon>
        <taxon>Pinidae</taxon>
        <taxon>Conifers I</taxon>
        <taxon>Pinales</taxon>
        <taxon>Pinaceae</taxon>
        <taxon>Picea</taxon>
    </lineage>
</organism>
<dbReference type="EC" id="4.2.3.76" evidence="2"/>
<dbReference type="EMBL" id="DQ195276">
    <property type="protein sequence ID" value="ABA86249.1"/>
    <property type="molecule type" value="mRNA"/>
</dbReference>
<dbReference type="EMBL" id="BT071470">
    <property type="protein sequence ID" value="ACN40929.1"/>
    <property type="molecule type" value="mRNA"/>
</dbReference>
<dbReference type="SMR" id="Q20HU6"/>
<dbReference type="BioCyc" id="MetaCyc:MONOMER-14954"/>
<dbReference type="UniPathway" id="UPA00213"/>
<dbReference type="UniPathway" id="UPA00924"/>
<dbReference type="GO" id="GO:0009507">
    <property type="term" value="C:chloroplast"/>
    <property type="evidence" value="ECO:0007669"/>
    <property type="project" value="UniProtKB-SubCell"/>
</dbReference>
<dbReference type="GO" id="GO:0000287">
    <property type="term" value="F:magnesium ion binding"/>
    <property type="evidence" value="ECO:0007669"/>
    <property type="project" value="InterPro"/>
</dbReference>
<dbReference type="GO" id="GO:0010333">
    <property type="term" value="F:terpene synthase activity"/>
    <property type="evidence" value="ECO:0007669"/>
    <property type="project" value="InterPro"/>
</dbReference>
<dbReference type="GO" id="GO:0016102">
    <property type="term" value="P:diterpenoid biosynthetic process"/>
    <property type="evidence" value="ECO:0007669"/>
    <property type="project" value="InterPro"/>
</dbReference>
<dbReference type="GO" id="GO:0009611">
    <property type="term" value="P:response to wounding"/>
    <property type="evidence" value="ECO:0000270"/>
    <property type="project" value="UniProtKB"/>
</dbReference>
<dbReference type="CDD" id="cd00684">
    <property type="entry name" value="Terpene_cyclase_plant_C1"/>
    <property type="match status" value="1"/>
</dbReference>
<dbReference type="FunFam" id="1.50.10.130:FF:000002">
    <property type="entry name" value="Ent-copalyl diphosphate synthase, chloroplastic"/>
    <property type="match status" value="1"/>
</dbReference>
<dbReference type="FunFam" id="1.10.600.10:FF:000005">
    <property type="entry name" value="Ent-kaur-16-ene synthase, chloroplastic"/>
    <property type="match status" value="1"/>
</dbReference>
<dbReference type="Gene3D" id="1.10.600.10">
    <property type="entry name" value="Farnesyl Diphosphate Synthase"/>
    <property type="match status" value="1"/>
</dbReference>
<dbReference type="Gene3D" id="1.50.10.130">
    <property type="entry name" value="Terpene synthase, N-terminal domain"/>
    <property type="match status" value="1"/>
</dbReference>
<dbReference type="InterPro" id="IPR008949">
    <property type="entry name" value="Isoprenoid_synthase_dom_sf"/>
</dbReference>
<dbReference type="InterPro" id="IPR034741">
    <property type="entry name" value="Terpene_cyclase-like_1_C"/>
</dbReference>
<dbReference type="InterPro" id="IPR044814">
    <property type="entry name" value="Terpene_cyclase_plant_C1"/>
</dbReference>
<dbReference type="InterPro" id="IPR001906">
    <property type="entry name" value="Terpene_synth_N"/>
</dbReference>
<dbReference type="InterPro" id="IPR036965">
    <property type="entry name" value="Terpene_synth_N_sf"/>
</dbReference>
<dbReference type="InterPro" id="IPR050148">
    <property type="entry name" value="Terpene_synthase-like"/>
</dbReference>
<dbReference type="InterPro" id="IPR005630">
    <property type="entry name" value="Terpene_synthase_metal-bd"/>
</dbReference>
<dbReference type="InterPro" id="IPR008930">
    <property type="entry name" value="Terpenoid_cyclase/PrenylTrfase"/>
</dbReference>
<dbReference type="PANTHER" id="PTHR31225">
    <property type="entry name" value="OS04G0344100 PROTEIN-RELATED"/>
    <property type="match status" value="1"/>
</dbReference>
<dbReference type="Pfam" id="PF01397">
    <property type="entry name" value="Terpene_synth"/>
    <property type="match status" value="1"/>
</dbReference>
<dbReference type="Pfam" id="PF03936">
    <property type="entry name" value="Terpene_synth_C"/>
    <property type="match status" value="1"/>
</dbReference>
<dbReference type="SFLD" id="SFLDS00005">
    <property type="entry name" value="Isoprenoid_Synthase_Type_I"/>
    <property type="match status" value="1"/>
</dbReference>
<dbReference type="SFLD" id="SFLDG01019">
    <property type="entry name" value="Terpene_Cyclase_Like_1_C_Termi"/>
    <property type="match status" value="1"/>
</dbReference>
<dbReference type="SFLD" id="SFLDG01014">
    <property type="entry name" value="Terpene_Cyclase_Like_1_N-term"/>
    <property type="match status" value="1"/>
</dbReference>
<dbReference type="SUPFAM" id="SSF48239">
    <property type="entry name" value="Terpenoid cyclases/Protein prenyltransferases"/>
    <property type="match status" value="1"/>
</dbReference>
<dbReference type="SUPFAM" id="SSF48576">
    <property type="entry name" value="Terpenoid synthases"/>
    <property type="match status" value="1"/>
</dbReference>
<feature type="transit peptide" description="Chloroplast" evidence="5">
    <location>
        <begin position="1"/>
        <end status="unknown"/>
    </location>
</feature>
<feature type="chain" id="PRO_0000455263" description="Delta-selinene-like synthase, chloroplastic">
    <location>
        <begin status="unknown"/>
        <end position="575"/>
    </location>
</feature>
<feature type="short sequence motif" description="DDXXD motif" evidence="1">
    <location>
        <begin position="325"/>
        <end position="329"/>
    </location>
</feature>
<feature type="binding site" evidence="3">
    <location>
        <position position="288"/>
    </location>
    <ligand>
        <name>(2E,6E)-farnesyl diphosphate</name>
        <dbReference type="ChEBI" id="CHEBI:175763"/>
    </ligand>
</feature>
<feature type="binding site" evidence="3">
    <location>
        <position position="325"/>
    </location>
    <ligand>
        <name>(2E,6E)-farnesyl diphosphate</name>
        <dbReference type="ChEBI" id="CHEBI:175763"/>
    </ligand>
</feature>
<feature type="binding site" evidence="3">
    <location>
        <position position="325"/>
    </location>
    <ligand>
        <name>Mg(2+)</name>
        <dbReference type="ChEBI" id="CHEBI:18420"/>
        <label>1</label>
    </ligand>
</feature>
<feature type="binding site" evidence="3">
    <location>
        <position position="325"/>
    </location>
    <ligand>
        <name>Mg(2+)</name>
        <dbReference type="ChEBI" id="CHEBI:18420"/>
        <label>2</label>
    </ligand>
</feature>
<feature type="binding site" evidence="3">
    <location>
        <position position="329"/>
    </location>
    <ligand>
        <name>(2E,6E)-farnesyl diphosphate</name>
        <dbReference type="ChEBI" id="CHEBI:175763"/>
    </ligand>
</feature>
<feature type="binding site" evidence="3">
    <location>
        <position position="329"/>
    </location>
    <ligand>
        <name>Mg(2+)</name>
        <dbReference type="ChEBI" id="CHEBI:18420"/>
        <label>1</label>
    </ligand>
</feature>
<feature type="binding site" evidence="3">
    <location>
        <position position="329"/>
    </location>
    <ligand>
        <name>Mg(2+)</name>
        <dbReference type="ChEBI" id="CHEBI:18420"/>
        <label>2</label>
    </ligand>
</feature>
<feature type="binding site" evidence="3">
    <location>
        <position position="466"/>
    </location>
    <ligand>
        <name>(2E,6E)-farnesyl diphosphate</name>
        <dbReference type="ChEBI" id="CHEBI:175763"/>
    </ligand>
</feature>
<feature type="binding site" evidence="3">
    <location>
        <position position="469"/>
    </location>
    <ligand>
        <name>(2E,6E)-farnesyl diphosphate</name>
        <dbReference type="ChEBI" id="CHEBI:175763"/>
    </ligand>
</feature>
<feature type="binding site" evidence="3">
    <location>
        <position position="469"/>
    </location>
    <ligand>
        <name>Mg(2+)</name>
        <dbReference type="ChEBI" id="CHEBI:18420"/>
        <label>3</label>
    </ligand>
</feature>
<feature type="binding site" evidence="3">
    <location>
        <position position="477"/>
    </location>
    <ligand>
        <name>Mg(2+)</name>
        <dbReference type="ChEBI" id="CHEBI:18420"/>
        <label>3</label>
    </ligand>
</feature>
<feature type="sequence conflict" description="In Ref. 2; ACN40929." evidence="8" ref="2">
    <original>Q</original>
    <variation>E</variation>
    <location>
        <position position="85"/>
    </location>
</feature>
<feature type="sequence conflict" description="In Ref. 2; ACN40929." evidence="8" ref="2">
    <original>G</original>
    <variation>A</variation>
    <location>
        <position position="106"/>
    </location>
</feature>
<feature type="sequence conflict" description="In Ref. 2; ACN40929." evidence="8" ref="2">
    <original>A</original>
    <variation>V</variation>
    <location>
        <position position="184"/>
    </location>
</feature>
<feature type="sequence conflict" description="In Ref. 2; ACN40929." evidence="8" ref="2">
    <original>Q</original>
    <variation>L</variation>
    <location>
        <position position="192"/>
    </location>
</feature>
<feature type="sequence conflict" description="In Ref. 2; ACN40929." evidence="8" ref="2">
    <original>K</original>
    <variation>E</variation>
    <location>
        <position position="380"/>
    </location>
</feature>
<feature type="sequence conflict" description="In Ref. 2; ACN40929." evidence="8" ref="2">
    <original>KANWQRY</original>
    <variation>NELAAIC</variation>
    <location>
        <begin position="390"/>
        <end position="396"/>
    </location>
</feature>
<evidence type="ECO:0000250" key="1">
    <source>
        <dbReference type="UniProtKB" id="A0A1C9J6A7"/>
    </source>
</evidence>
<evidence type="ECO:0000250" key="2">
    <source>
        <dbReference type="UniProtKB" id="O64404"/>
    </source>
</evidence>
<evidence type="ECO:0000250" key="3">
    <source>
        <dbReference type="UniProtKB" id="Q40577"/>
    </source>
</evidence>
<evidence type="ECO:0000250" key="4">
    <source>
        <dbReference type="UniProtKB" id="Q6JD73"/>
    </source>
</evidence>
<evidence type="ECO:0000255" key="5"/>
<evidence type="ECO:0000269" key="6">
    <source>
    </source>
</evidence>
<evidence type="ECO:0000303" key="7">
    <source>
    </source>
</evidence>
<evidence type="ECO:0000305" key="8"/>
<proteinExistence type="evidence at transcript level"/>
<sequence length="575" mass="66615">MAQISESAAIPRRTANHHGNVWDDDLILSLDSPYGAPAYYERVANLIEEMKHLLLREMEDSNHDLIRRLQIVDTLECLGIDRHFQHEIKTAALDYVYRCWNEKGIGMGSSDSGSKDLDATALGLRALRLHRYNVSSGVLENFKDENGKFFCNLTGDKRVRSMLSLLRASEISFPGEKVMQEAKAFTREYLTQVLAGRGDVTDVDQSLLREVKYALEFPWHWSVPRWEARSFIEIYGQNHSWLKSNINQKVLELAKLDFNILQCIHQKEIQFIVRWWRESEIAQLNFYRKRHVEFYFWVVICIFEPEFSQSRIAFAKICTVATVLDDLYDTHGMLDELKTVTEGVSRWDLPLIDDLPDNIKIAFQFFFNTANELAVEVVKKQGRDMIALLKANWQRYVESYLQEAEWIATRHVPSFDEYIKNARASSGMCIGNLIPLLLLGQLLANNIVEQIHSPSKIQELSELTIRLIDDIRDFEDEKERGEIASAIECYMKDNPDSTVENALNHLEGILHLSLEELNWEFIKQDTVPLCCKKFTFNIVRGLQFVYKYGDGLSISNKEVKDQIFKILIDQVPIEE</sequence>
<gene>
    <name evidence="7" type="primary">TPS-Sell</name>
</gene>
<reference key="1">
    <citation type="journal article" date="2006" name="Plant Physiol.">
        <title>Wound-induced terpene synthase gene expression in Sitka spruce that exhibit resistance or susceptibility to attack by the white pine weevil.</title>
        <authorList>
            <person name="Byun-McKay A."/>
            <person name="Godard K.-A."/>
            <person name="Toudefallah M."/>
            <person name="Martin D.M."/>
            <person name="Alfaro R."/>
            <person name="King J."/>
            <person name="Bohlmann J."/>
            <person name="Plant A.L."/>
        </authorList>
    </citation>
    <scope>NUCLEOTIDE SEQUENCE [MRNA]</scope>
    <scope>INDUCTION BY WOUNDING</scope>
</reference>
<reference key="2">
    <citation type="submission" date="2009-02" db="EMBL/GenBank/DDBJ databases">
        <title>Full length sequence-verified cDNA sequences from Sitka spruce (Picea sitchensis).</title>
        <authorList>
            <person name="Reid K.E."/>
            <person name="Liao N."/>
            <person name="Ralph S."/>
            <person name="Kolosova N."/>
            <person name="Oddy C."/>
            <person name="Moore R."/>
            <person name="Mayo M."/>
            <person name="Wagner S."/>
            <person name="King J."/>
            <person name="Yanchuk A."/>
            <person name="Holt R."/>
            <person name="Jones S."/>
            <person name="Marra M."/>
            <person name="Ritland C.E."/>
            <person name="Ritland K."/>
            <person name="Bohlmann J."/>
        </authorList>
    </citation>
    <scope>NUCLEOTIDE SEQUENCE [MRNA] OF 1-396</scope>
    <source>
        <strain>cv. FB3-425</strain>
        <tissue>Bark</tissue>
    </source>
</reference>
<comment type="function">
    <text evidence="2 7">Sesquiterpene synthase (sesqui-TPS) involved in the biosynthesis of sesquiterpene natural products (PubMed:16415217). Catalyzes the conversion of (2E)-geranyl diphosphate (GPP) into delta-selinene (By similarity).</text>
</comment>
<comment type="catalytic activity">
    <reaction evidence="2">
        <text>(2E,6E)-farnesyl diphosphate = (+)-delta-selinene + diphosphate</text>
        <dbReference type="Rhea" id="RHEA:30423"/>
        <dbReference type="ChEBI" id="CHEBI:33019"/>
        <dbReference type="ChEBI" id="CHEBI:49279"/>
        <dbReference type="ChEBI" id="CHEBI:175763"/>
        <dbReference type="EC" id="4.2.3.76"/>
    </reaction>
</comment>
<comment type="cofactor">
    <cofactor evidence="1">
        <name>Mg(2+)</name>
        <dbReference type="ChEBI" id="CHEBI:18420"/>
    </cofactor>
    <cofactor evidence="1">
        <name>Mn(2+)</name>
        <dbReference type="ChEBI" id="CHEBI:29035"/>
    </cofactor>
    <text evidence="1">Binds 3 Mg(2+) or Mn(2+) ions per subunit.</text>
</comment>
<comment type="pathway">
    <text evidence="7">Secondary metabolite biosynthesis; terpenoid biosynthesis.</text>
</comment>
<comment type="pathway">
    <text evidence="7">Terpene metabolism; oleoresin biosynthesis.</text>
</comment>
<comment type="subunit">
    <text evidence="4">Monomer.</text>
</comment>
<comment type="subcellular location">
    <subcellularLocation>
        <location evidence="5">Plastid</location>
        <location evidence="5">Chloroplast</location>
    </subcellularLocation>
</comment>
<comment type="induction">
    <text evidence="6">Accumulates in apical leaders upon wounding in both resistant and susceptible to white pine weevil (Pissodes strobi) plants.</text>
</comment>
<comment type="domain">
    <text evidence="8">The Asp-Asp-Xaa-Xaa-Asp/Glu (DDXXD/E) motif is important for the catalytic activity, presumably through binding to Mg(2+).</text>
</comment>
<comment type="similarity">
    <text evidence="8">Belongs to the terpene synthase family. Tpsb subfamily.</text>
</comment>
<keyword id="KW-0150">Chloroplast</keyword>
<keyword id="KW-0456">Lyase</keyword>
<keyword id="KW-0460">Magnesium</keyword>
<keyword id="KW-0479">Metal-binding</keyword>
<keyword id="KW-0934">Plastid</keyword>
<keyword id="KW-0809">Transit peptide</keyword>
<accession>Q20HU6</accession>
<accession>C0PSY9</accession>